<gene>
    <name type="ordered locus">BruAb2_0797</name>
</gene>
<feature type="chain" id="PRO_0000328694" description="Putative peptide import ATP-binding protein BruAb2_0797">
    <location>
        <begin position="1"/>
        <end position="317"/>
    </location>
</feature>
<feature type="domain" description="ABC transporter" evidence="2">
    <location>
        <begin position="7"/>
        <end position="250"/>
    </location>
</feature>
<feature type="binding site" evidence="2">
    <location>
        <begin position="43"/>
        <end position="50"/>
    </location>
    <ligand>
        <name>ATP</name>
        <dbReference type="ChEBI" id="CHEBI:30616"/>
    </ligand>
</feature>
<organism>
    <name type="scientific">Brucella abortus biovar 1 (strain 9-941)</name>
    <dbReference type="NCBI Taxonomy" id="262698"/>
    <lineage>
        <taxon>Bacteria</taxon>
        <taxon>Pseudomonadati</taxon>
        <taxon>Pseudomonadota</taxon>
        <taxon>Alphaproteobacteria</taxon>
        <taxon>Hyphomicrobiales</taxon>
        <taxon>Brucellaceae</taxon>
        <taxon>Brucella/Ochrobactrum group</taxon>
        <taxon>Brucella</taxon>
    </lineage>
</organism>
<accession>Q577J4</accession>
<dbReference type="EC" id="7.4.2.-"/>
<dbReference type="EMBL" id="AE017224">
    <property type="protein sequence ID" value="AAX76190.1"/>
    <property type="molecule type" value="Genomic_DNA"/>
</dbReference>
<dbReference type="RefSeq" id="WP_002966203.1">
    <property type="nucleotide sequence ID" value="NC_006933.1"/>
</dbReference>
<dbReference type="SMR" id="Q577J4"/>
<dbReference type="EnsemblBacteria" id="AAX76190">
    <property type="protein sequence ID" value="AAX76190"/>
    <property type="gene ID" value="BruAb2_0797"/>
</dbReference>
<dbReference type="KEGG" id="bmb:BruAb2_0797"/>
<dbReference type="HOGENOM" id="CLU_000604_1_23_5"/>
<dbReference type="Proteomes" id="UP000000540">
    <property type="component" value="Chromosome II"/>
</dbReference>
<dbReference type="GO" id="GO:0005886">
    <property type="term" value="C:plasma membrane"/>
    <property type="evidence" value="ECO:0007669"/>
    <property type="project" value="UniProtKB-SubCell"/>
</dbReference>
<dbReference type="GO" id="GO:0005524">
    <property type="term" value="F:ATP binding"/>
    <property type="evidence" value="ECO:0007669"/>
    <property type="project" value="UniProtKB-KW"/>
</dbReference>
<dbReference type="GO" id="GO:0016887">
    <property type="term" value="F:ATP hydrolysis activity"/>
    <property type="evidence" value="ECO:0007669"/>
    <property type="project" value="InterPro"/>
</dbReference>
<dbReference type="GO" id="GO:0015833">
    <property type="term" value="P:peptide transport"/>
    <property type="evidence" value="ECO:0007669"/>
    <property type="project" value="UniProtKB-KW"/>
</dbReference>
<dbReference type="GO" id="GO:0015031">
    <property type="term" value="P:protein transport"/>
    <property type="evidence" value="ECO:0007669"/>
    <property type="project" value="UniProtKB-KW"/>
</dbReference>
<dbReference type="GO" id="GO:0055085">
    <property type="term" value="P:transmembrane transport"/>
    <property type="evidence" value="ECO:0007669"/>
    <property type="project" value="UniProtKB-ARBA"/>
</dbReference>
<dbReference type="CDD" id="cd03257">
    <property type="entry name" value="ABC_NikE_OppD_transporters"/>
    <property type="match status" value="1"/>
</dbReference>
<dbReference type="FunFam" id="3.40.50.300:FF:000016">
    <property type="entry name" value="Oligopeptide ABC transporter ATP-binding component"/>
    <property type="match status" value="1"/>
</dbReference>
<dbReference type="Gene3D" id="3.40.50.300">
    <property type="entry name" value="P-loop containing nucleotide triphosphate hydrolases"/>
    <property type="match status" value="1"/>
</dbReference>
<dbReference type="InterPro" id="IPR003593">
    <property type="entry name" value="AAA+_ATPase"/>
</dbReference>
<dbReference type="InterPro" id="IPR050319">
    <property type="entry name" value="ABC_transp_ATP-bind"/>
</dbReference>
<dbReference type="InterPro" id="IPR003439">
    <property type="entry name" value="ABC_transporter-like_ATP-bd"/>
</dbReference>
<dbReference type="InterPro" id="IPR017871">
    <property type="entry name" value="ABC_transporter-like_CS"/>
</dbReference>
<dbReference type="InterPro" id="IPR013563">
    <property type="entry name" value="Oligopep_ABC_C"/>
</dbReference>
<dbReference type="InterPro" id="IPR027417">
    <property type="entry name" value="P-loop_NTPase"/>
</dbReference>
<dbReference type="NCBIfam" id="TIGR01727">
    <property type="entry name" value="oligo_HPY"/>
    <property type="match status" value="1"/>
</dbReference>
<dbReference type="PANTHER" id="PTHR43776:SF7">
    <property type="entry name" value="D,D-DIPEPTIDE TRANSPORT ATP-BINDING PROTEIN DDPF-RELATED"/>
    <property type="match status" value="1"/>
</dbReference>
<dbReference type="PANTHER" id="PTHR43776">
    <property type="entry name" value="TRANSPORT ATP-BINDING PROTEIN"/>
    <property type="match status" value="1"/>
</dbReference>
<dbReference type="Pfam" id="PF00005">
    <property type="entry name" value="ABC_tran"/>
    <property type="match status" value="1"/>
</dbReference>
<dbReference type="Pfam" id="PF08352">
    <property type="entry name" value="oligo_HPY"/>
    <property type="match status" value="1"/>
</dbReference>
<dbReference type="SMART" id="SM00382">
    <property type="entry name" value="AAA"/>
    <property type="match status" value="1"/>
</dbReference>
<dbReference type="SUPFAM" id="SSF52540">
    <property type="entry name" value="P-loop containing nucleoside triphosphate hydrolases"/>
    <property type="match status" value="1"/>
</dbReference>
<dbReference type="PROSITE" id="PS00211">
    <property type="entry name" value="ABC_TRANSPORTER_1"/>
    <property type="match status" value="1"/>
</dbReference>
<dbReference type="PROSITE" id="PS50893">
    <property type="entry name" value="ABC_TRANSPORTER_2"/>
    <property type="match status" value="1"/>
</dbReference>
<name>Y3097_BRUAB</name>
<protein>
    <recommendedName>
        <fullName>Putative peptide import ATP-binding protein BruAb2_0797</fullName>
        <ecNumber>7.4.2.-</ecNumber>
    </recommendedName>
</protein>
<evidence type="ECO:0000250" key="1"/>
<evidence type="ECO:0000255" key="2">
    <source>
        <dbReference type="PROSITE-ProRule" id="PRU00434"/>
    </source>
</evidence>
<evidence type="ECO:0000305" key="3"/>
<comment type="function">
    <text evidence="1">Probably part of an ABC transporter complex that could be involved in peptide import. Probably responsible for energy coupling to the transport system (By similarity).</text>
</comment>
<comment type="subunit">
    <text evidence="3">The complex is composed of two ATP-binding proteins (BruAb2_0796 and BruAb2_0797), two transmembrane proteins (BruAb2_0794) and a solute-binding protein (BruAb2_0792).</text>
</comment>
<comment type="subcellular location">
    <subcellularLocation>
        <location evidence="3">Cell inner membrane</location>
        <topology evidence="3">Peripheral membrane protein</topology>
    </subcellularLocation>
</comment>
<comment type="similarity">
    <text evidence="3">Belongs to the ABC transporter superfamily.</text>
</comment>
<keyword id="KW-0067">ATP-binding</keyword>
<keyword id="KW-0997">Cell inner membrane</keyword>
<keyword id="KW-1003">Cell membrane</keyword>
<keyword id="KW-0472">Membrane</keyword>
<keyword id="KW-0547">Nucleotide-binding</keyword>
<keyword id="KW-0571">Peptide transport</keyword>
<keyword id="KW-0653">Protein transport</keyword>
<keyword id="KW-1278">Translocase</keyword>
<keyword id="KW-0813">Transport</keyword>
<sequence>MTETPLLSVRGLAKHYQTRSATLKILDNVSFDIARGEVVGLVGESGSGKTTIGRSVLRLIEPTAGQIMFDGADVATLSAREMRRQRRRMQYIFQDPFASLSPRMTIGEILMEGLNIQGIGTKAERLERARKALEQVELPPDTINRYAHEFSGGQRQRIGIARALTLEPDFIVADEPVSALDVSIQAQVVNLLRDLQQRLGLTMLFISHDLAVVEYICDRVIVLYLGRIMEIASSEDLYARPQHPYTRALLSAIPSPDPDARTERQILRGDIPSPANPPSGCVFRTRCPMAIDACATTVPQLREVRPGHFKACIRDNI</sequence>
<proteinExistence type="inferred from homology"/>
<reference key="1">
    <citation type="journal article" date="2005" name="J. Bacteriol.">
        <title>Completion of the genome sequence of Brucella abortus and comparison to the highly similar genomes of Brucella melitensis and Brucella suis.</title>
        <authorList>
            <person name="Halling S.M."/>
            <person name="Peterson-Burch B.D."/>
            <person name="Bricker B.J."/>
            <person name="Zuerner R.L."/>
            <person name="Qing Z."/>
            <person name="Li L.-L."/>
            <person name="Kapur V."/>
            <person name="Alt D.P."/>
            <person name="Olsen S.C."/>
        </authorList>
    </citation>
    <scope>NUCLEOTIDE SEQUENCE [LARGE SCALE GENOMIC DNA]</scope>
    <source>
        <strain>9-941</strain>
    </source>
</reference>